<accession>Q0SZA9</accession>
<comment type="function">
    <text evidence="1">Involved in the gluconeogenesis. Catalyzes stereospecifically the conversion of dihydroxyacetone phosphate (DHAP) to D-glyceraldehyde-3-phosphate (G3P).</text>
</comment>
<comment type="catalytic activity">
    <reaction evidence="1">
        <text>D-glyceraldehyde 3-phosphate = dihydroxyacetone phosphate</text>
        <dbReference type="Rhea" id="RHEA:18585"/>
        <dbReference type="ChEBI" id="CHEBI:57642"/>
        <dbReference type="ChEBI" id="CHEBI:59776"/>
        <dbReference type="EC" id="5.3.1.1"/>
    </reaction>
</comment>
<comment type="pathway">
    <text evidence="1">Carbohydrate biosynthesis; gluconeogenesis.</text>
</comment>
<comment type="pathway">
    <text evidence="1">Carbohydrate degradation; glycolysis; D-glyceraldehyde 3-phosphate from glycerone phosphate: step 1/1.</text>
</comment>
<comment type="subunit">
    <text evidence="1">Homodimer.</text>
</comment>
<comment type="subcellular location">
    <subcellularLocation>
        <location evidence="1">Cytoplasm</location>
    </subcellularLocation>
</comment>
<comment type="similarity">
    <text evidence="1">Belongs to the triosephosphate isomerase family.</text>
</comment>
<keyword id="KW-0963">Cytoplasm</keyword>
<keyword id="KW-0312">Gluconeogenesis</keyword>
<keyword id="KW-0324">Glycolysis</keyword>
<keyword id="KW-0413">Isomerase</keyword>
<protein>
    <recommendedName>
        <fullName evidence="1">Triosephosphate isomerase</fullName>
        <shortName evidence="1">TIM</shortName>
        <shortName evidence="1">TPI</shortName>
        <ecNumber evidence="1">5.3.1.1</ecNumber>
    </recommendedName>
    <alternativeName>
        <fullName evidence="1">Triose-phosphate isomerase</fullName>
    </alternativeName>
</protein>
<name>TPIS_SHIF8</name>
<organism>
    <name type="scientific">Shigella flexneri serotype 5b (strain 8401)</name>
    <dbReference type="NCBI Taxonomy" id="373384"/>
    <lineage>
        <taxon>Bacteria</taxon>
        <taxon>Pseudomonadati</taxon>
        <taxon>Pseudomonadota</taxon>
        <taxon>Gammaproteobacteria</taxon>
        <taxon>Enterobacterales</taxon>
        <taxon>Enterobacteriaceae</taxon>
        <taxon>Shigella</taxon>
    </lineage>
</organism>
<evidence type="ECO:0000255" key="1">
    <source>
        <dbReference type="HAMAP-Rule" id="MF_00147"/>
    </source>
</evidence>
<proteinExistence type="inferred from homology"/>
<gene>
    <name evidence="1" type="primary">tpiA</name>
    <name type="ordered locus">SFV_3575</name>
</gene>
<sequence>MRHPLVMGNWKLNGSRHMVHELVSNLRKELAGVAGCAVAIAPPEMYIDMAKREAEGSHIMLGAQNVDLNLSGAFTGETSAAMLKDIGAQYIIIGHSERRTYHKESDELIAKKFAVLKEQGLTPVLCIGETEAENEAGKTEEVCARQIDAVLKTQGAAAFEGAVIAYEPVWAIGTGKSATPAQAQAVHKFIRDHIAKVDANIAEQVIIQYGGSVNASNAAELFAQPDIDGALVGGASLKADAFAVIVKAAEAAKQA</sequence>
<reference key="1">
    <citation type="journal article" date="2006" name="BMC Genomics">
        <title>Complete genome sequence of Shigella flexneri 5b and comparison with Shigella flexneri 2a.</title>
        <authorList>
            <person name="Nie H."/>
            <person name="Yang F."/>
            <person name="Zhang X."/>
            <person name="Yang J."/>
            <person name="Chen L."/>
            <person name="Wang J."/>
            <person name="Xiong Z."/>
            <person name="Peng J."/>
            <person name="Sun L."/>
            <person name="Dong J."/>
            <person name="Xue Y."/>
            <person name="Xu X."/>
            <person name="Chen S."/>
            <person name="Yao Z."/>
            <person name="Shen Y."/>
            <person name="Jin Q."/>
        </authorList>
    </citation>
    <scope>NUCLEOTIDE SEQUENCE [LARGE SCALE GENOMIC DNA]</scope>
    <source>
        <strain>8401</strain>
    </source>
</reference>
<dbReference type="EC" id="5.3.1.1" evidence="1"/>
<dbReference type="EMBL" id="CP000266">
    <property type="protein sequence ID" value="ABF05606.1"/>
    <property type="molecule type" value="Genomic_DNA"/>
</dbReference>
<dbReference type="RefSeq" id="WP_001216325.1">
    <property type="nucleotide sequence ID" value="NC_008258.1"/>
</dbReference>
<dbReference type="SMR" id="Q0SZA9"/>
<dbReference type="GeneID" id="93777979"/>
<dbReference type="KEGG" id="sfv:SFV_3575"/>
<dbReference type="HOGENOM" id="CLU_024251_2_1_6"/>
<dbReference type="UniPathway" id="UPA00109">
    <property type="reaction ID" value="UER00189"/>
</dbReference>
<dbReference type="UniPathway" id="UPA00138"/>
<dbReference type="Proteomes" id="UP000000659">
    <property type="component" value="Chromosome"/>
</dbReference>
<dbReference type="GO" id="GO:0005829">
    <property type="term" value="C:cytosol"/>
    <property type="evidence" value="ECO:0007669"/>
    <property type="project" value="TreeGrafter"/>
</dbReference>
<dbReference type="GO" id="GO:0004807">
    <property type="term" value="F:triose-phosphate isomerase activity"/>
    <property type="evidence" value="ECO:0007669"/>
    <property type="project" value="UniProtKB-UniRule"/>
</dbReference>
<dbReference type="GO" id="GO:0006094">
    <property type="term" value="P:gluconeogenesis"/>
    <property type="evidence" value="ECO:0007669"/>
    <property type="project" value="UniProtKB-UniRule"/>
</dbReference>
<dbReference type="GO" id="GO:0046166">
    <property type="term" value="P:glyceraldehyde-3-phosphate biosynthetic process"/>
    <property type="evidence" value="ECO:0007669"/>
    <property type="project" value="TreeGrafter"/>
</dbReference>
<dbReference type="GO" id="GO:0019563">
    <property type="term" value="P:glycerol catabolic process"/>
    <property type="evidence" value="ECO:0007669"/>
    <property type="project" value="TreeGrafter"/>
</dbReference>
<dbReference type="GO" id="GO:0006096">
    <property type="term" value="P:glycolytic process"/>
    <property type="evidence" value="ECO:0007669"/>
    <property type="project" value="UniProtKB-UniRule"/>
</dbReference>
<dbReference type="CDD" id="cd00311">
    <property type="entry name" value="TIM"/>
    <property type="match status" value="1"/>
</dbReference>
<dbReference type="FunFam" id="3.20.20.70:FF:000020">
    <property type="entry name" value="Triosephosphate isomerase"/>
    <property type="match status" value="1"/>
</dbReference>
<dbReference type="Gene3D" id="3.20.20.70">
    <property type="entry name" value="Aldolase class I"/>
    <property type="match status" value="1"/>
</dbReference>
<dbReference type="HAMAP" id="MF_00147_B">
    <property type="entry name" value="TIM_B"/>
    <property type="match status" value="1"/>
</dbReference>
<dbReference type="InterPro" id="IPR013785">
    <property type="entry name" value="Aldolase_TIM"/>
</dbReference>
<dbReference type="InterPro" id="IPR035990">
    <property type="entry name" value="TIM_sf"/>
</dbReference>
<dbReference type="InterPro" id="IPR022896">
    <property type="entry name" value="TrioseP_Isoase_bac/euk"/>
</dbReference>
<dbReference type="InterPro" id="IPR000652">
    <property type="entry name" value="Triosephosphate_isomerase"/>
</dbReference>
<dbReference type="InterPro" id="IPR020861">
    <property type="entry name" value="Triosephosphate_isomerase_AS"/>
</dbReference>
<dbReference type="NCBIfam" id="TIGR00419">
    <property type="entry name" value="tim"/>
    <property type="match status" value="1"/>
</dbReference>
<dbReference type="PANTHER" id="PTHR21139">
    <property type="entry name" value="TRIOSEPHOSPHATE ISOMERASE"/>
    <property type="match status" value="1"/>
</dbReference>
<dbReference type="PANTHER" id="PTHR21139:SF42">
    <property type="entry name" value="TRIOSEPHOSPHATE ISOMERASE"/>
    <property type="match status" value="1"/>
</dbReference>
<dbReference type="Pfam" id="PF00121">
    <property type="entry name" value="TIM"/>
    <property type="match status" value="1"/>
</dbReference>
<dbReference type="SUPFAM" id="SSF51351">
    <property type="entry name" value="Triosephosphate isomerase (TIM)"/>
    <property type="match status" value="1"/>
</dbReference>
<dbReference type="PROSITE" id="PS00171">
    <property type="entry name" value="TIM_1"/>
    <property type="match status" value="1"/>
</dbReference>
<dbReference type="PROSITE" id="PS51440">
    <property type="entry name" value="TIM_2"/>
    <property type="match status" value="1"/>
</dbReference>
<feature type="chain" id="PRO_0000307562" description="Triosephosphate isomerase">
    <location>
        <begin position="1"/>
        <end position="255"/>
    </location>
</feature>
<feature type="active site" description="Electrophile" evidence="1">
    <location>
        <position position="95"/>
    </location>
</feature>
<feature type="active site" description="Proton acceptor" evidence="1">
    <location>
        <position position="167"/>
    </location>
</feature>
<feature type="binding site" evidence="1">
    <location>
        <begin position="9"/>
        <end position="11"/>
    </location>
    <ligand>
        <name>substrate</name>
    </ligand>
</feature>
<feature type="binding site" evidence="1">
    <location>
        <position position="173"/>
    </location>
    <ligand>
        <name>substrate</name>
    </ligand>
</feature>
<feature type="binding site" evidence="1">
    <location>
        <position position="212"/>
    </location>
    <ligand>
        <name>substrate</name>
    </ligand>
</feature>
<feature type="binding site" evidence="1">
    <location>
        <begin position="233"/>
        <end position="234"/>
    </location>
    <ligand>
        <name>substrate</name>
    </ligand>
</feature>